<comment type="function">
    <text evidence="1">Regulates mitochondrial small subunit maturation by controlling 15S rRNA 5'-end processing. Localizes to the 5' precursor of the 15S rRNA in a position that is subsequently occupied by mS47 in the mature yeast mtSSU. Uses structure and sequence-specific RNA recognition, binding to a single-stranded region of the precursor and specifically recognizing bases -6 to -1. The exchange of Ccm1 for mS47 is coupled to the irreversible removal of precursor rRNA that is accompanied by conformational changes of the mitoribosomal proteins uS5m and mS26. These conformational changes signal completion of 5'-end rRNA processing through protection of the mature 5'-end of the 15S rRNA and stabilization of mS47. The removal of the 5' precursor together with the dissociation of Ccm1 may be catalyzed by the 5'-3' exoribonuclease Pet127. Involved in the specific removal of group I introns in mitochondrial encoded transcripts.</text>
</comment>
<comment type="subunit">
    <text evidence="1">Binds to mitochondrial small subunit 15S rRNA.</text>
</comment>
<comment type="subcellular location">
    <subcellularLocation>
        <location evidence="1">Mitochondrion</location>
    </subcellularLocation>
</comment>
<comment type="miscellaneous">
    <text evidence="1">Involved in mitochondrial-nuclear incompatibility, a major determinant in reproductive isolation between species, through hybrid incompatibility of Ccm1 and its interacting partner 15S rRNA between yeast species.</text>
</comment>
<comment type="similarity">
    <text evidence="5">Belongs to the CCM1 family.</text>
</comment>
<reference key="1">
    <citation type="journal article" date="2009" name="Genome Res.">
        <title>Comparative genomics of protoploid Saccharomycetaceae.</title>
        <authorList>
            <consortium name="The Genolevures Consortium"/>
            <person name="Souciet J.-L."/>
            <person name="Dujon B."/>
            <person name="Gaillardin C."/>
            <person name="Johnston M."/>
            <person name="Baret P.V."/>
            <person name="Cliften P."/>
            <person name="Sherman D.J."/>
            <person name="Weissenbach J."/>
            <person name="Westhof E."/>
            <person name="Wincker P."/>
            <person name="Jubin C."/>
            <person name="Poulain J."/>
            <person name="Barbe V."/>
            <person name="Segurens B."/>
            <person name="Artiguenave F."/>
            <person name="Anthouard V."/>
            <person name="Vacherie B."/>
            <person name="Val M.-E."/>
            <person name="Fulton R.S."/>
            <person name="Minx P."/>
            <person name="Wilson R."/>
            <person name="Durrens P."/>
            <person name="Jean G."/>
            <person name="Marck C."/>
            <person name="Martin T."/>
            <person name="Nikolski M."/>
            <person name="Rolland T."/>
            <person name="Seret M.-L."/>
            <person name="Casaregola S."/>
            <person name="Despons L."/>
            <person name="Fairhead C."/>
            <person name="Fischer G."/>
            <person name="Lafontaine I."/>
            <person name="Leh V."/>
            <person name="Lemaire M."/>
            <person name="de Montigny J."/>
            <person name="Neuveglise C."/>
            <person name="Thierry A."/>
            <person name="Blanc-Lenfle I."/>
            <person name="Bleykasten C."/>
            <person name="Diffels J."/>
            <person name="Fritsch E."/>
            <person name="Frangeul L."/>
            <person name="Goeffon A."/>
            <person name="Jauniaux N."/>
            <person name="Kachouri-Lafond R."/>
            <person name="Payen C."/>
            <person name="Potier S."/>
            <person name="Pribylova L."/>
            <person name="Ozanne C."/>
            <person name="Richard G.-F."/>
            <person name="Sacerdot C."/>
            <person name="Straub M.-L."/>
            <person name="Talla E."/>
        </authorList>
    </citation>
    <scope>NUCLEOTIDE SEQUENCE [LARGE SCALE GENOMIC DNA]</scope>
    <source>
        <strain>ATCC 56472 / CBS 6340 / NRRL Y-8284</strain>
    </source>
</reference>
<name>CCM1_LACTC</name>
<accession>C5DHU5</accession>
<feature type="transit peptide" description="Mitochondrion" evidence="2">
    <location>
        <begin position="1"/>
        <end position="72"/>
    </location>
</feature>
<feature type="chain" id="PRO_0000402264" description="Mitochondrial 15S rRNA processing factor CCM1" evidence="2">
    <location>
        <begin position="73"/>
        <end position="871"/>
    </location>
</feature>
<feature type="repeat" description="PPR 1" evidence="3">
    <location>
        <begin position="333"/>
        <end position="369"/>
    </location>
</feature>
<feature type="repeat" description="PPR 2" evidence="3">
    <location>
        <begin position="370"/>
        <end position="404"/>
    </location>
</feature>
<feature type="region of interest" description="Disordered" evidence="4">
    <location>
        <begin position="704"/>
        <end position="724"/>
    </location>
</feature>
<protein>
    <recommendedName>
        <fullName>Mitochondrial 15S rRNA processing factor CCM1</fullName>
    </recommendedName>
</protein>
<dbReference type="EMBL" id="CU928169">
    <property type="protein sequence ID" value="CAR23356.1"/>
    <property type="molecule type" value="Genomic_DNA"/>
</dbReference>
<dbReference type="RefSeq" id="XP_002553793.1">
    <property type="nucleotide sequence ID" value="XM_002553747.1"/>
</dbReference>
<dbReference type="SMR" id="C5DHU5"/>
<dbReference type="FunCoup" id="C5DHU5">
    <property type="interactions" value="136"/>
</dbReference>
<dbReference type="STRING" id="559295.C5DHU5"/>
<dbReference type="GeneID" id="8291948"/>
<dbReference type="KEGG" id="lth:KLTH0E07194g"/>
<dbReference type="eggNOG" id="ENOG502QUX2">
    <property type="taxonomic scope" value="Eukaryota"/>
</dbReference>
<dbReference type="HOGENOM" id="CLU_334653_0_0_1"/>
<dbReference type="InParanoid" id="C5DHU5"/>
<dbReference type="OMA" id="ESSAIWA"/>
<dbReference type="OrthoDB" id="185373at2759"/>
<dbReference type="Proteomes" id="UP000002036">
    <property type="component" value="Chromosome E"/>
</dbReference>
<dbReference type="GO" id="GO:0005739">
    <property type="term" value="C:mitochondrion"/>
    <property type="evidence" value="ECO:0007669"/>
    <property type="project" value="UniProtKB-SubCell"/>
</dbReference>
<dbReference type="GO" id="GO:0006397">
    <property type="term" value="P:mRNA processing"/>
    <property type="evidence" value="ECO:0007669"/>
    <property type="project" value="UniProtKB-KW"/>
</dbReference>
<dbReference type="GO" id="GO:0008380">
    <property type="term" value="P:RNA splicing"/>
    <property type="evidence" value="ECO:0007669"/>
    <property type="project" value="UniProtKB-KW"/>
</dbReference>
<dbReference type="Gene3D" id="1.25.40.10">
    <property type="entry name" value="Tetratricopeptide repeat domain"/>
    <property type="match status" value="1"/>
</dbReference>
<dbReference type="InterPro" id="IPR002885">
    <property type="entry name" value="Pentatricopeptide_rpt"/>
</dbReference>
<dbReference type="InterPro" id="IPR011990">
    <property type="entry name" value="TPR-like_helical_dom_sf"/>
</dbReference>
<dbReference type="NCBIfam" id="TIGR00756">
    <property type="entry name" value="PPR"/>
    <property type="match status" value="1"/>
</dbReference>
<dbReference type="PANTHER" id="PTHR47447">
    <property type="entry name" value="OS03G0856100 PROTEIN"/>
    <property type="match status" value="1"/>
</dbReference>
<dbReference type="PANTHER" id="PTHR47447:SF24">
    <property type="entry name" value="PENTATRICOPEPTIDE REPEAT-CONTAINING PROTEIN"/>
    <property type="match status" value="1"/>
</dbReference>
<dbReference type="Pfam" id="PF13041">
    <property type="entry name" value="PPR_2"/>
    <property type="match status" value="1"/>
</dbReference>
<dbReference type="PROSITE" id="PS51375">
    <property type="entry name" value="PPR"/>
    <property type="match status" value="2"/>
</dbReference>
<sequence length="871" mass="99353">MLGRRLAGAKPQSGALFKRFVVIPASSKARRRRRDVGGIRKNVSVEELELDKALDLRDPKELEFKLRQLREFTKNLATQIRVADDLVKKEAAQKELGNKSKEEDTADAASVILGTHNHHDRYQRRSLLQGEDLSSIILSVSHQVKKLLPEAILKRINDDELVLRSLINHRNSDWNAIISKLDQSPEKLDGVSQRALKNYILSKAKNLSLGSIRKADAMLLSNINHDLTKFNTSMYEFLFYNLSNLKPSQDPSSKYNNEVYTVMESLLDRYDEAQKVIAGKNVAIEAQEGIMPKVEMNQFILNCCIKFASKLLDVSKMNRFLTKFNRDYHILPNKENYTVIAQFYTKLGLHDKAWDIFATMKFLSADHKPDAKTYTCMLSLCNKEKNYAKAIDLFNEMIDLKVDPTPETLNALVKTLATVSGDPVASEGKAESLRLLAWKYLHQNEDLVNLRSGNFEDTILAMMSLCAYDGDAGLARALYFKYITTRFKSNFESWRMRQGDHSSVDYKKVWASTLNPFLFNYLMLAYANYSPGKLPLLLGFEQGAVTRRNLINNVDYLYKFQNDEAGPRAKLPMLPLADISEPSQILLESRAVWQFNLEFGGLCDLRISPLGSSKVLKDLAASAESIEDFSFQVLHQIALWKTQIVNHNALNPKSIMTYLTIPLKLGEKKEFLLRMSEFSYEQQTFEQHISSLYMNTKQQLLTARPGSSTHLTHSEIKKQPSSQTSFNEESSLAFLSSMKHKIIRNSSIYELTMKAAIRFQDQALATKAWESRGSYRKTLAFQNLPVAERTKKDAAFASLMVDFFTQQQMYTDAMGIIMASQRHISWRYPMVKRLHRKLVELEDTRSIKILMEIVNKRSKSDSSAEAVTSLG</sequence>
<proteinExistence type="inferred from homology"/>
<organism>
    <name type="scientific">Lachancea thermotolerans (strain ATCC 56472 / CBS 6340 / NRRL Y-8284)</name>
    <name type="common">Yeast</name>
    <name type="synonym">Kluyveromyces thermotolerans</name>
    <dbReference type="NCBI Taxonomy" id="559295"/>
    <lineage>
        <taxon>Eukaryota</taxon>
        <taxon>Fungi</taxon>
        <taxon>Dikarya</taxon>
        <taxon>Ascomycota</taxon>
        <taxon>Saccharomycotina</taxon>
        <taxon>Saccharomycetes</taxon>
        <taxon>Saccharomycetales</taxon>
        <taxon>Saccharomycetaceae</taxon>
        <taxon>Lachancea</taxon>
    </lineage>
</organism>
<keyword id="KW-0496">Mitochondrion</keyword>
<keyword id="KW-0507">mRNA processing</keyword>
<keyword id="KW-0508">mRNA splicing</keyword>
<keyword id="KW-1185">Reference proteome</keyword>
<keyword id="KW-0677">Repeat</keyword>
<keyword id="KW-0809">Transit peptide</keyword>
<evidence type="ECO:0000250" key="1">
    <source>
        <dbReference type="UniProtKB" id="P48237"/>
    </source>
</evidence>
<evidence type="ECO:0000255" key="2"/>
<evidence type="ECO:0000255" key="3">
    <source>
        <dbReference type="PROSITE-ProRule" id="PRU00708"/>
    </source>
</evidence>
<evidence type="ECO:0000256" key="4">
    <source>
        <dbReference type="SAM" id="MobiDB-lite"/>
    </source>
</evidence>
<evidence type="ECO:0000305" key="5"/>
<gene>
    <name type="primary">CCM1</name>
    <name type="ordered locus">KLTH0E07194g</name>
</gene>